<reference key="1">
    <citation type="journal article" date="2005" name="PLoS Genet.">
        <title>Life in hot carbon monoxide: the complete genome sequence of Carboxydothermus hydrogenoformans Z-2901.</title>
        <authorList>
            <person name="Wu M."/>
            <person name="Ren Q."/>
            <person name="Durkin A.S."/>
            <person name="Daugherty S.C."/>
            <person name="Brinkac L.M."/>
            <person name="Dodson R.J."/>
            <person name="Madupu R."/>
            <person name="Sullivan S.A."/>
            <person name="Kolonay J.F."/>
            <person name="Nelson W.C."/>
            <person name="Tallon L.J."/>
            <person name="Jones K.M."/>
            <person name="Ulrich L.E."/>
            <person name="Gonzalez J.M."/>
            <person name="Zhulin I.B."/>
            <person name="Robb F.T."/>
            <person name="Eisen J.A."/>
        </authorList>
    </citation>
    <scope>NUCLEOTIDE SEQUENCE [LARGE SCALE GENOMIC DNA]</scope>
    <source>
        <strain>ATCC BAA-161 / DSM 6008 / Z-2901</strain>
    </source>
</reference>
<gene>
    <name evidence="1" type="primary">alaS</name>
    <name type="ordered locus">CHY_0538</name>
</gene>
<dbReference type="EC" id="6.1.1.7" evidence="1"/>
<dbReference type="EMBL" id="CP000141">
    <property type="protein sequence ID" value="ABB15946.1"/>
    <property type="molecule type" value="Genomic_DNA"/>
</dbReference>
<dbReference type="RefSeq" id="WP_011343472.1">
    <property type="nucleotide sequence ID" value="NC_007503.1"/>
</dbReference>
<dbReference type="SMR" id="Q3AEN8"/>
<dbReference type="FunCoup" id="Q3AEN8">
    <property type="interactions" value="464"/>
</dbReference>
<dbReference type="STRING" id="246194.CHY_0538"/>
<dbReference type="KEGG" id="chy:CHY_0538"/>
<dbReference type="eggNOG" id="COG0013">
    <property type="taxonomic scope" value="Bacteria"/>
</dbReference>
<dbReference type="HOGENOM" id="CLU_004485_1_1_9"/>
<dbReference type="InParanoid" id="Q3AEN8"/>
<dbReference type="OrthoDB" id="9803884at2"/>
<dbReference type="Proteomes" id="UP000002706">
    <property type="component" value="Chromosome"/>
</dbReference>
<dbReference type="GO" id="GO:0005829">
    <property type="term" value="C:cytosol"/>
    <property type="evidence" value="ECO:0007669"/>
    <property type="project" value="TreeGrafter"/>
</dbReference>
<dbReference type="GO" id="GO:0004813">
    <property type="term" value="F:alanine-tRNA ligase activity"/>
    <property type="evidence" value="ECO:0007669"/>
    <property type="project" value="UniProtKB-UniRule"/>
</dbReference>
<dbReference type="GO" id="GO:0002161">
    <property type="term" value="F:aminoacyl-tRNA deacylase activity"/>
    <property type="evidence" value="ECO:0007669"/>
    <property type="project" value="TreeGrafter"/>
</dbReference>
<dbReference type="GO" id="GO:0005524">
    <property type="term" value="F:ATP binding"/>
    <property type="evidence" value="ECO:0007669"/>
    <property type="project" value="UniProtKB-UniRule"/>
</dbReference>
<dbReference type="GO" id="GO:0140096">
    <property type="term" value="F:catalytic activity, acting on a protein"/>
    <property type="evidence" value="ECO:0007669"/>
    <property type="project" value="UniProtKB-ARBA"/>
</dbReference>
<dbReference type="GO" id="GO:0016740">
    <property type="term" value="F:transferase activity"/>
    <property type="evidence" value="ECO:0007669"/>
    <property type="project" value="UniProtKB-ARBA"/>
</dbReference>
<dbReference type="GO" id="GO:0000049">
    <property type="term" value="F:tRNA binding"/>
    <property type="evidence" value="ECO:0007669"/>
    <property type="project" value="UniProtKB-KW"/>
</dbReference>
<dbReference type="GO" id="GO:0008270">
    <property type="term" value="F:zinc ion binding"/>
    <property type="evidence" value="ECO:0007669"/>
    <property type="project" value="UniProtKB-UniRule"/>
</dbReference>
<dbReference type="GO" id="GO:0006419">
    <property type="term" value="P:alanyl-tRNA aminoacylation"/>
    <property type="evidence" value="ECO:0007669"/>
    <property type="project" value="UniProtKB-UniRule"/>
</dbReference>
<dbReference type="CDD" id="cd00673">
    <property type="entry name" value="AlaRS_core"/>
    <property type="match status" value="1"/>
</dbReference>
<dbReference type="FunFam" id="2.40.30.130:FF:000001">
    <property type="entry name" value="Alanine--tRNA ligase"/>
    <property type="match status" value="1"/>
</dbReference>
<dbReference type="FunFam" id="3.10.310.40:FF:000001">
    <property type="entry name" value="Alanine--tRNA ligase"/>
    <property type="match status" value="1"/>
</dbReference>
<dbReference type="FunFam" id="3.30.54.20:FF:000001">
    <property type="entry name" value="Alanine--tRNA ligase"/>
    <property type="match status" value="1"/>
</dbReference>
<dbReference type="FunFam" id="3.30.930.10:FF:000004">
    <property type="entry name" value="Alanine--tRNA ligase"/>
    <property type="match status" value="1"/>
</dbReference>
<dbReference type="FunFam" id="3.30.980.10:FF:000004">
    <property type="entry name" value="Alanine--tRNA ligase, cytoplasmic"/>
    <property type="match status" value="1"/>
</dbReference>
<dbReference type="Gene3D" id="2.40.30.130">
    <property type="match status" value="1"/>
</dbReference>
<dbReference type="Gene3D" id="3.10.310.40">
    <property type="match status" value="1"/>
</dbReference>
<dbReference type="Gene3D" id="3.30.54.20">
    <property type="match status" value="1"/>
</dbReference>
<dbReference type="Gene3D" id="6.10.250.550">
    <property type="match status" value="1"/>
</dbReference>
<dbReference type="Gene3D" id="3.30.930.10">
    <property type="entry name" value="Bira Bifunctional Protein, Domain 2"/>
    <property type="match status" value="1"/>
</dbReference>
<dbReference type="Gene3D" id="3.30.980.10">
    <property type="entry name" value="Threonyl-trna Synthetase, Chain A, domain 2"/>
    <property type="match status" value="1"/>
</dbReference>
<dbReference type="HAMAP" id="MF_00036_B">
    <property type="entry name" value="Ala_tRNA_synth_B"/>
    <property type="match status" value="1"/>
</dbReference>
<dbReference type="InterPro" id="IPR045864">
    <property type="entry name" value="aa-tRNA-synth_II/BPL/LPL"/>
</dbReference>
<dbReference type="InterPro" id="IPR002318">
    <property type="entry name" value="Ala-tRNA-lgiase_IIc"/>
</dbReference>
<dbReference type="InterPro" id="IPR018162">
    <property type="entry name" value="Ala-tRNA-ligase_IIc_anticod-bd"/>
</dbReference>
<dbReference type="InterPro" id="IPR018165">
    <property type="entry name" value="Ala-tRNA-synth_IIc_core"/>
</dbReference>
<dbReference type="InterPro" id="IPR018164">
    <property type="entry name" value="Ala-tRNA-synth_IIc_N"/>
</dbReference>
<dbReference type="InterPro" id="IPR050058">
    <property type="entry name" value="Ala-tRNA_ligase"/>
</dbReference>
<dbReference type="InterPro" id="IPR023033">
    <property type="entry name" value="Ala_tRNA_ligase_euk/bac"/>
</dbReference>
<dbReference type="InterPro" id="IPR003156">
    <property type="entry name" value="DHHA1_dom"/>
</dbReference>
<dbReference type="InterPro" id="IPR018163">
    <property type="entry name" value="Thr/Ala-tRNA-synth_IIc_edit"/>
</dbReference>
<dbReference type="InterPro" id="IPR009000">
    <property type="entry name" value="Transl_B-barrel_sf"/>
</dbReference>
<dbReference type="InterPro" id="IPR012947">
    <property type="entry name" value="tRNA_SAD"/>
</dbReference>
<dbReference type="NCBIfam" id="TIGR00344">
    <property type="entry name" value="alaS"/>
    <property type="match status" value="1"/>
</dbReference>
<dbReference type="PANTHER" id="PTHR11777:SF9">
    <property type="entry name" value="ALANINE--TRNA LIGASE, CYTOPLASMIC"/>
    <property type="match status" value="1"/>
</dbReference>
<dbReference type="PANTHER" id="PTHR11777">
    <property type="entry name" value="ALANYL-TRNA SYNTHETASE"/>
    <property type="match status" value="1"/>
</dbReference>
<dbReference type="Pfam" id="PF02272">
    <property type="entry name" value="DHHA1"/>
    <property type="match status" value="1"/>
</dbReference>
<dbReference type="Pfam" id="PF01411">
    <property type="entry name" value="tRNA-synt_2c"/>
    <property type="match status" value="1"/>
</dbReference>
<dbReference type="Pfam" id="PF07973">
    <property type="entry name" value="tRNA_SAD"/>
    <property type="match status" value="1"/>
</dbReference>
<dbReference type="PRINTS" id="PR00980">
    <property type="entry name" value="TRNASYNTHALA"/>
</dbReference>
<dbReference type="SMART" id="SM00863">
    <property type="entry name" value="tRNA_SAD"/>
    <property type="match status" value="1"/>
</dbReference>
<dbReference type="SUPFAM" id="SSF55681">
    <property type="entry name" value="Class II aaRS and biotin synthetases"/>
    <property type="match status" value="1"/>
</dbReference>
<dbReference type="SUPFAM" id="SSF101353">
    <property type="entry name" value="Putative anticodon-binding domain of alanyl-tRNA synthetase (AlaRS)"/>
    <property type="match status" value="1"/>
</dbReference>
<dbReference type="SUPFAM" id="SSF55186">
    <property type="entry name" value="ThrRS/AlaRS common domain"/>
    <property type="match status" value="1"/>
</dbReference>
<dbReference type="SUPFAM" id="SSF50447">
    <property type="entry name" value="Translation proteins"/>
    <property type="match status" value="1"/>
</dbReference>
<dbReference type="PROSITE" id="PS50860">
    <property type="entry name" value="AA_TRNA_LIGASE_II_ALA"/>
    <property type="match status" value="1"/>
</dbReference>
<accession>Q3AEN8</accession>
<keyword id="KW-0030">Aminoacyl-tRNA synthetase</keyword>
<keyword id="KW-0067">ATP-binding</keyword>
<keyword id="KW-0963">Cytoplasm</keyword>
<keyword id="KW-0436">Ligase</keyword>
<keyword id="KW-0479">Metal-binding</keyword>
<keyword id="KW-0547">Nucleotide-binding</keyword>
<keyword id="KW-0648">Protein biosynthesis</keyword>
<keyword id="KW-1185">Reference proteome</keyword>
<keyword id="KW-0694">RNA-binding</keyword>
<keyword id="KW-0820">tRNA-binding</keyword>
<keyword id="KW-0862">Zinc</keyword>
<evidence type="ECO:0000255" key="1">
    <source>
        <dbReference type="HAMAP-Rule" id="MF_00036"/>
    </source>
</evidence>
<proteinExistence type="inferred from homology"/>
<protein>
    <recommendedName>
        <fullName evidence="1">Alanine--tRNA ligase</fullName>
        <ecNumber evidence="1">6.1.1.7</ecNumber>
    </recommendedName>
    <alternativeName>
        <fullName evidence="1">Alanyl-tRNA synthetase</fullName>
        <shortName evidence="1">AlaRS</shortName>
    </alternativeName>
</protein>
<organism>
    <name type="scientific">Carboxydothermus hydrogenoformans (strain ATCC BAA-161 / DSM 6008 / Z-2901)</name>
    <dbReference type="NCBI Taxonomy" id="246194"/>
    <lineage>
        <taxon>Bacteria</taxon>
        <taxon>Bacillati</taxon>
        <taxon>Bacillota</taxon>
        <taxon>Clostridia</taxon>
        <taxon>Thermoanaerobacterales</taxon>
        <taxon>Thermoanaerobacteraceae</taxon>
        <taxon>Carboxydothermus</taxon>
    </lineage>
</organism>
<sequence>MLAREIREKFLKFFESKGHKILPSASLIPANDPSLLWTAAGMVPFKPYFTGAAVPEVRRVTTCQKCLRTPDIESVGRTARHHTFFEMLGNFSFGDYFKKEAITWAWEFVTEHLGISKDKLYITIYLDDDEAFDIWHNVVGVPAERITRLGKDTNFWEIGVGPCGPCSEIYVDLGPEKGCGSPDCGVACDCGRFLEIWNLVFIQFFRDEQGNYTPLEQKGIDTGMGLERVASVLQGVPSNFDTDIFREIMDYAAQILGVKYGYDEKVDVALKVIADHTRAITFAITDGALPSNEGRGYVIRRLLRRALRFGRLLDREEPFLHLVAAKVIEQMGDVYPELREKAEHTLKIIKLEEEKFRETLNQGLSMLAELMERLTQEGKKEIPGHLAFKLYDTYGFPIELTKEIAEEKGFTVDEEGFKQQMEEQRRRAREAREDVDYLSTRDAFLKQLKEELGEVTFVGYEKLSESTEIIAIIKNGQKVESLAAEEEGEIITRVTPFYPEGGGQVADKGEILGDGFKLSVLDVEKPLSDFILHKVKVVEGSVKVGDKATLMVDETTRMSTARNHTATHLLHKALKMVLGEHVNQAGSLVTPERLRFDFTHFEGVSDEDLRKIENIVNEAILRNLLVQIDYTTLDEARKAGVIALFDEKYGDLVRVVKIGEFSAELCGGTHVSSTGVIGFFKILGESSIGAGVRRIEALTGLGALEYVRSLEDTLQKATEPYKCTFAELPEKISNTLKTLKEKDREIEALMQKIASIEVKSLLNSVREIKGVKVLSAIIDGADMEGLRKAYDVVKASLANYVVLLAGVKDGKVNFLAGVDKNLTDKYHAGELVKEAAKIAGGGGGGRPDMAQAGGKNPEKVKEALQVIDAYVQSK</sequence>
<feature type="chain" id="PRO_0000347545" description="Alanine--tRNA ligase">
    <location>
        <begin position="1"/>
        <end position="874"/>
    </location>
</feature>
<feature type="binding site" evidence="1">
    <location>
        <position position="564"/>
    </location>
    <ligand>
        <name>Zn(2+)</name>
        <dbReference type="ChEBI" id="CHEBI:29105"/>
    </ligand>
</feature>
<feature type="binding site" evidence="1">
    <location>
        <position position="568"/>
    </location>
    <ligand>
        <name>Zn(2+)</name>
        <dbReference type="ChEBI" id="CHEBI:29105"/>
    </ligand>
</feature>
<feature type="binding site" evidence="1">
    <location>
        <position position="666"/>
    </location>
    <ligand>
        <name>Zn(2+)</name>
        <dbReference type="ChEBI" id="CHEBI:29105"/>
    </ligand>
</feature>
<feature type="binding site" evidence="1">
    <location>
        <position position="670"/>
    </location>
    <ligand>
        <name>Zn(2+)</name>
        <dbReference type="ChEBI" id="CHEBI:29105"/>
    </ligand>
</feature>
<name>SYA_CARHZ</name>
<comment type="function">
    <text evidence="1">Catalyzes the attachment of alanine to tRNA(Ala) in a two-step reaction: alanine is first activated by ATP to form Ala-AMP and then transferred to the acceptor end of tRNA(Ala). Also edits incorrectly charged Ser-tRNA(Ala) and Gly-tRNA(Ala) via its editing domain.</text>
</comment>
<comment type="catalytic activity">
    <reaction evidence="1">
        <text>tRNA(Ala) + L-alanine + ATP = L-alanyl-tRNA(Ala) + AMP + diphosphate</text>
        <dbReference type="Rhea" id="RHEA:12540"/>
        <dbReference type="Rhea" id="RHEA-COMP:9657"/>
        <dbReference type="Rhea" id="RHEA-COMP:9923"/>
        <dbReference type="ChEBI" id="CHEBI:30616"/>
        <dbReference type="ChEBI" id="CHEBI:33019"/>
        <dbReference type="ChEBI" id="CHEBI:57972"/>
        <dbReference type="ChEBI" id="CHEBI:78442"/>
        <dbReference type="ChEBI" id="CHEBI:78497"/>
        <dbReference type="ChEBI" id="CHEBI:456215"/>
        <dbReference type="EC" id="6.1.1.7"/>
    </reaction>
</comment>
<comment type="cofactor">
    <cofactor evidence="1">
        <name>Zn(2+)</name>
        <dbReference type="ChEBI" id="CHEBI:29105"/>
    </cofactor>
    <text evidence="1">Binds 1 zinc ion per subunit.</text>
</comment>
<comment type="subcellular location">
    <subcellularLocation>
        <location evidence="1">Cytoplasm</location>
    </subcellularLocation>
</comment>
<comment type="domain">
    <text evidence="1">Consists of three domains; the N-terminal catalytic domain, the editing domain and the C-terminal C-Ala domain. The editing domain removes incorrectly charged amino acids, while the C-Ala domain, along with tRNA(Ala), serves as a bridge to cooperatively bring together the editing and aminoacylation centers thus stimulating deacylation of misacylated tRNAs.</text>
</comment>
<comment type="similarity">
    <text evidence="1">Belongs to the class-II aminoacyl-tRNA synthetase family.</text>
</comment>